<dbReference type="EMBL" id="AM263198">
    <property type="protein sequence ID" value="CAK21511.1"/>
    <property type="molecule type" value="Genomic_DNA"/>
</dbReference>
<dbReference type="RefSeq" id="WP_003722329.1">
    <property type="nucleotide sequence ID" value="NC_008555.1"/>
</dbReference>
<dbReference type="SMR" id="A0AKH9"/>
<dbReference type="STRING" id="386043.lwe2093"/>
<dbReference type="KEGG" id="lwe:lwe2093"/>
<dbReference type="eggNOG" id="COG2344">
    <property type="taxonomic scope" value="Bacteria"/>
</dbReference>
<dbReference type="HOGENOM" id="CLU_061534_1_1_9"/>
<dbReference type="OrthoDB" id="9784760at2"/>
<dbReference type="Proteomes" id="UP000000779">
    <property type="component" value="Chromosome"/>
</dbReference>
<dbReference type="GO" id="GO:0005737">
    <property type="term" value="C:cytoplasm"/>
    <property type="evidence" value="ECO:0007669"/>
    <property type="project" value="UniProtKB-SubCell"/>
</dbReference>
<dbReference type="GO" id="GO:0003677">
    <property type="term" value="F:DNA binding"/>
    <property type="evidence" value="ECO:0007669"/>
    <property type="project" value="UniProtKB-UniRule"/>
</dbReference>
<dbReference type="GO" id="GO:0003700">
    <property type="term" value="F:DNA-binding transcription factor activity"/>
    <property type="evidence" value="ECO:0007669"/>
    <property type="project" value="UniProtKB-UniRule"/>
</dbReference>
<dbReference type="GO" id="GO:0045892">
    <property type="term" value="P:negative regulation of DNA-templated transcription"/>
    <property type="evidence" value="ECO:0007669"/>
    <property type="project" value="InterPro"/>
</dbReference>
<dbReference type="GO" id="GO:0051775">
    <property type="term" value="P:response to redox state"/>
    <property type="evidence" value="ECO:0007669"/>
    <property type="project" value="InterPro"/>
</dbReference>
<dbReference type="Gene3D" id="3.40.50.720">
    <property type="entry name" value="NAD(P)-binding Rossmann-like Domain"/>
    <property type="match status" value="1"/>
</dbReference>
<dbReference type="Gene3D" id="1.10.10.10">
    <property type="entry name" value="Winged helix-like DNA-binding domain superfamily/Winged helix DNA-binding domain"/>
    <property type="match status" value="1"/>
</dbReference>
<dbReference type="HAMAP" id="MF_01131">
    <property type="entry name" value="Rex"/>
    <property type="match status" value="1"/>
</dbReference>
<dbReference type="InterPro" id="IPR003781">
    <property type="entry name" value="CoA-bd"/>
</dbReference>
<dbReference type="InterPro" id="IPR036291">
    <property type="entry name" value="NAD(P)-bd_dom_sf"/>
</dbReference>
<dbReference type="InterPro" id="IPR009718">
    <property type="entry name" value="Rex_DNA-bd_C_dom"/>
</dbReference>
<dbReference type="InterPro" id="IPR022876">
    <property type="entry name" value="Tscrpt_rep_Rex"/>
</dbReference>
<dbReference type="InterPro" id="IPR036388">
    <property type="entry name" value="WH-like_DNA-bd_sf"/>
</dbReference>
<dbReference type="InterPro" id="IPR036390">
    <property type="entry name" value="WH_DNA-bd_sf"/>
</dbReference>
<dbReference type="NCBIfam" id="NF003989">
    <property type="entry name" value="PRK05472.1-3"/>
    <property type="match status" value="1"/>
</dbReference>
<dbReference type="NCBIfam" id="NF003991">
    <property type="entry name" value="PRK05472.1-5"/>
    <property type="match status" value="1"/>
</dbReference>
<dbReference type="NCBIfam" id="NF003994">
    <property type="entry name" value="PRK05472.2-3"/>
    <property type="match status" value="1"/>
</dbReference>
<dbReference type="NCBIfam" id="NF003995">
    <property type="entry name" value="PRK05472.2-4"/>
    <property type="match status" value="1"/>
</dbReference>
<dbReference type="NCBIfam" id="NF003996">
    <property type="entry name" value="PRK05472.2-5"/>
    <property type="match status" value="1"/>
</dbReference>
<dbReference type="PANTHER" id="PTHR35786">
    <property type="entry name" value="REDOX-SENSING TRANSCRIPTIONAL REPRESSOR REX"/>
    <property type="match status" value="1"/>
</dbReference>
<dbReference type="PANTHER" id="PTHR35786:SF1">
    <property type="entry name" value="REDOX-SENSING TRANSCRIPTIONAL REPRESSOR REX 1"/>
    <property type="match status" value="1"/>
</dbReference>
<dbReference type="Pfam" id="PF02629">
    <property type="entry name" value="CoA_binding"/>
    <property type="match status" value="1"/>
</dbReference>
<dbReference type="Pfam" id="PF06971">
    <property type="entry name" value="Put_DNA-bind_N"/>
    <property type="match status" value="1"/>
</dbReference>
<dbReference type="SMART" id="SM00881">
    <property type="entry name" value="CoA_binding"/>
    <property type="match status" value="1"/>
</dbReference>
<dbReference type="SUPFAM" id="SSF51735">
    <property type="entry name" value="NAD(P)-binding Rossmann-fold domains"/>
    <property type="match status" value="1"/>
</dbReference>
<dbReference type="SUPFAM" id="SSF46785">
    <property type="entry name" value="Winged helix' DNA-binding domain"/>
    <property type="match status" value="1"/>
</dbReference>
<feature type="chain" id="PRO_1000065411" description="Redox-sensing transcriptional repressor Rex">
    <location>
        <begin position="1"/>
        <end position="215"/>
    </location>
</feature>
<feature type="DNA-binding region" description="H-T-H motif" evidence="1">
    <location>
        <begin position="18"/>
        <end position="57"/>
    </location>
</feature>
<feature type="binding site" evidence="1">
    <location>
        <begin position="92"/>
        <end position="97"/>
    </location>
    <ligand>
        <name>NAD(+)</name>
        <dbReference type="ChEBI" id="CHEBI:57540"/>
    </ligand>
</feature>
<protein>
    <recommendedName>
        <fullName evidence="1">Redox-sensing transcriptional repressor Rex</fullName>
    </recommendedName>
</protein>
<comment type="function">
    <text evidence="1">Modulates transcription in response to changes in cellular NADH/NAD(+) redox state.</text>
</comment>
<comment type="subunit">
    <text evidence="1">Homodimer.</text>
</comment>
<comment type="subcellular location">
    <subcellularLocation>
        <location evidence="1">Cytoplasm</location>
    </subcellularLocation>
</comment>
<comment type="similarity">
    <text evidence="1">Belongs to the transcriptional regulatory Rex family.</text>
</comment>
<evidence type="ECO:0000255" key="1">
    <source>
        <dbReference type="HAMAP-Rule" id="MF_01131"/>
    </source>
</evidence>
<keyword id="KW-0963">Cytoplasm</keyword>
<keyword id="KW-0238">DNA-binding</keyword>
<keyword id="KW-0520">NAD</keyword>
<keyword id="KW-0678">Repressor</keyword>
<keyword id="KW-0804">Transcription</keyword>
<keyword id="KW-0805">Transcription regulation</keyword>
<proteinExistence type="inferred from homology"/>
<reference key="1">
    <citation type="journal article" date="2006" name="J. Bacteriol.">
        <title>Whole-genome sequence of Listeria welshimeri reveals common steps in genome reduction with Listeria innocua as compared to Listeria monocytogenes.</title>
        <authorList>
            <person name="Hain T."/>
            <person name="Steinweg C."/>
            <person name="Kuenne C.T."/>
            <person name="Billion A."/>
            <person name="Ghai R."/>
            <person name="Chatterjee S.S."/>
            <person name="Domann E."/>
            <person name="Kaerst U."/>
            <person name="Goesmann A."/>
            <person name="Bekel T."/>
            <person name="Bartels D."/>
            <person name="Kaiser O."/>
            <person name="Meyer F."/>
            <person name="Puehler A."/>
            <person name="Weisshaar B."/>
            <person name="Wehland J."/>
            <person name="Liang C."/>
            <person name="Dandekar T."/>
            <person name="Lampidis R."/>
            <person name="Kreft J."/>
            <person name="Goebel W."/>
            <person name="Chakraborty T."/>
        </authorList>
    </citation>
    <scope>NUCLEOTIDE SEQUENCE [LARGE SCALE GENOMIC DNA]</scope>
    <source>
        <strain>ATCC 35897 / DSM 20650 / CCUG 15529 / CIP 8149 / NCTC 11857 / SLCC 5334 / V8</strain>
    </source>
</reference>
<accession>A0AKH9</accession>
<gene>
    <name evidence="1" type="primary">rex</name>
    <name type="ordered locus">lwe2093</name>
</gene>
<organism>
    <name type="scientific">Listeria welshimeri serovar 6b (strain ATCC 35897 / DSM 20650 / CCUG 15529 / CIP 8149 / NCTC 11857 / SLCC 5334 / V8)</name>
    <dbReference type="NCBI Taxonomy" id="386043"/>
    <lineage>
        <taxon>Bacteria</taxon>
        <taxon>Bacillati</taxon>
        <taxon>Bacillota</taxon>
        <taxon>Bacilli</taxon>
        <taxon>Bacillales</taxon>
        <taxon>Listeriaceae</taxon>
        <taxon>Listeria</taxon>
    </lineage>
</organism>
<name>REX_LISW6</name>
<sequence length="215" mass="24200">MMEETTKIPQATAKRLPLYHRYLKYLDESGKERVSSAELSEAVKVDSATIRRDFSYFGALGKKGYGYNVSYILDFFSKTLSQDKQTNVALIGVGNLGTALLHYNFMKNNNIKIVAAFDVDPAKVGSVQQDIPIYHLNDMEEIVRENGVEVVILTVPADEAQVTVDRLIEADVKGILNFTPARISVPKQVRVHHIDLTTELQTLIYFLENYPAKTE</sequence>